<gene>
    <name type="primary">ypoC</name>
    <name type="synonym">jooC</name>
    <name type="ordered locus">BSU22330</name>
</gene>
<sequence length="164" mass="19346">MTQAKEVLASYEQYLRSLGQKSSSDMKKTLQTNPVYFDFCTELQGDLPWEDSGKYVPLLFEVWDDIKASLLPVFQTRKSRCDQNEMLKGIVCLLASLHWTAGEPVKSLDWQELREKSYPAKPINWAERVEFILLKPTQYHCFIQLDELITEMKKHFYKYHAMNR</sequence>
<proteinExistence type="evidence at protein level"/>
<name>YPOC_BACSU</name>
<accession>P39789</accession>
<keyword id="KW-0597">Phosphoprotein</keyword>
<keyword id="KW-1185">Reference proteome</keyword>
<dbReference type="EMBL" id="U11289">
    <property type="protein sequence ID" value="AAA80006.1"/>
    <property type="molecule type" value="Genomic_DNA"/>
</dbReference>
<dbReference type="EMBL" id="U11883">
    <property type="protein sequence ID" value="AAA64948.1"/>
    <property type="molecule type" value="Genomic_DNA"/>
</dbReference>
<dbReference type="EMBL" id="L47709">
    <property type="protein sequence ID" value="AAB38458.1"/>
    <property type="molecule type" value="Genomic_DNA"/>
</dbReference>
<dbReference type="EMBL" id="AL009126">
    <property type="protein sequence ID" value="CAB14149.1"/>
    <property type="molecule type" value="Genomic_DNA"/>
</dbReference>
<dbReference type="PIR" id="I40526">
    <property type="entry name" value="I40526"/>
</dbReference>
<dbReference type="RefSeq" id="NP_390114.1">
    <property type="nucleotide sequence ID" value="NC_000964.3"/>
</dbReference>
<dbReference type="RefSeq" id="WP_009967579.1">
    <property type="nucleotide sequence ID" value="NZ_OZ025638.1"/>
</dbReference>
<dbReference type="SMR" id="P39789"/>
<dbReference type="FunCoup" id="P39789">
    <property type="interactions" value="127"/>
</dbReference>
<dbReference type="STRING" id="224308.BSU22330"/>
<dbReference type="iPTMnet" id="P39789"/>
<dbReference type="jPOST" id="P39789"/>
<dbReference type="PaxDb" id="224308-BSU22330"/>
<dbReference type="EnsemblBacteria" id="CAB14149">
    <property type="protein sequence ID" value="CAB14149"/>
    <property type="gene ID" value="BSU_22330"/>
</dbReference>
<dbReference type="GeneID" id="939041"/>
<dbReference type="KEGG" id="bsu:BSU22330"/>
<dbReference type="PATRIC" id="fig|224308.179.peg.2437"/>
<dbReference type="eggNOG" id="ENOG5033AMM">
    <property type="taxonomic scope" value="Bacteria"/>
</dbReference>
<dbReference type="InParanoid" id="P39789"/>
<dbReference type="OrthoDB" id="2360594at2"/>
<dbReference type="BioCyc" id="BSUB:BSU22330-MONOMER"/>
<dbReference type="Proteomes" id="UP000001570">
    <property type="component" value="Chromosome"/>
</dbReference>
<dbReference type="InterPro" id="IPR048427">
    <property type="entry name" value="YpoC"/>
</dbReference>
<dbReference type="Pfam" id="PF21747">
    <property type="entry name" value="YpoC"/>
    <property type="match status" value="1"/>
</dbReference>
<organism>
    <name type="scientific">Bacillus subtilis (strain 168)</name>
    <dbReference type="NCBI Taxonomy" id="224308"/>
    <lineage>
        <taxon>Bacteria</taxon>
        <taxon>Bacillati</taxon>
        <taxon>Bacillota</taxon>
        <taxon>Bacilli</taxon>
        <taxon>Bacillales</taxon>
        <taxon>Bacillaceae</taxon>
        <taxon>Bacillus</taxon>
    </lineage>
</organism>
<protein>
    <recommendedName>
        <fullName>Uncharacterized protein YpoC</fullName>
    </recommendedName>
    <alternativeName>
        <fullName>ORFY</fullName>
    </alternativeName>
</protein>
<reference key="1">
    <citation type="journal article" date="1995" name="Microbiology">
        <title>Nucleotide sequence of the Bacillus subtilis dnaD gene.</title>
        <authorList>
            <person name="Bruand C."/>
            <person name="Sorokin A."/>
            <person name="Serror P."/>
            <person name="Ehrlich S.D."/>
        </authorList>
    </citation>
    <scope>NUCLEOTIDE SEQUENCE [GENOMIC DNA]</scope>
    <source>
        <strain>168</strain>
    </source>
</reference>
<reference key="2">
    <citation type="journal article" date="1995" name="J. Bacteriol.">
        <title>Cloning, nucleotide sequence, and mutagenesis of the Bacillus subtilis ponA operon, which codes for penicillin-binding protein (PBP) 1 and a PBP-related factor.</title>
        <authorList>
            <person name="Popham D.L."/>
            <person name="Setlow P."/>
        </authorList>
    </citation>
    <scope>NUCLEOTIDE SEQUENCE [GENOMIC DNA]</scope>
    <source>
        <strain>168</strain>
    </source>
</reference>
<reference key="3">
    <citation type="journal article" date="1997" name="Nature">
        <title>The complete genome sequence of the Gram-positive bacterium Bacillus subtilis.</title>
        <authorList>
            <person name="Kunst F."/>
            <person name="Ogasawara N."/>
            <person name="Moszer I."/>
            <person name="Albertini A.M."/>
            <person name="Alloni G."/>
            <person name="Azevedo V."/>
            <person name="Bertero M.G."/>
            <person name="Bessieres P."/>
            <person name="Bolotin A."/>
            <person name="Borchert S."/>
            <person name="Borriss R."/>
            <person name="Boursier L."/>
            <person name="Brans A."/>
            <person name="Braun M."/>
            <person name="Brignell S.C."/>
            <person name="Bron S."/>
            <person name="Brouillet S."/>
            <person name="Bruschi C.V."/>
            <person name="Caldwell B."/>
            <person name="Capuano V."/>
            <person name="Carter N.M."/>
            <person name="Choi S.-K."/>
            <person name="Codani J.-J."/>
            <person name="Connerton I.F."/>
            <person name="Cummings N.J."/>
            <person name="Daniel R.A."/>
            <person name="Denizot F."/>
            <person name="Devine K.M."/>
            <person name="Duesterhoeft A."/>
            <person name="Ehrlich S.D."/>
            <person name="Emmerson P.T."/>
            <person name="Entian K.-D."/>
            <person name="Errington J."/>
            <person name="Fabret C."/>
            <person name="Ferrari E."/>
            <person name="Foulger D."/>
            <person name="Fritz C."/>
            <person name="Fujita M."/>
            <person name="Fujita Y."/>
            <person name="Fuma S."/>
            <person name="Galizzi A."/>
            <person name="Galleron N."/>
            <person name="Ghim S.-Y."/>
            <person name="Glaser P."/>
            <person name="Goffeau A."/>
            <person name="Golightly E.J."/>
            <person name="Grandi G."/>
            <person name="Guiseppi G."/>
            <person name="Guy B.J."/>
            <person name="Haga K."/>
            <person name="Haiech J."/>
            <person name="Harwood C.R."/>
            <person name="Henaut A."/>
            <person name="Hilbert H."/>
            <person name="Holsappel S."/>
            <person name="Hosono S."/>
            <person name="Hullo M.-F."/>
            <person name="Itaya M."/>
            <person name="Jones L.-M."/>
            <person name="Joris B."/>
            <person name="Karamata D."/>
            <person name="Kasahara Y."/>
            <person name="Klaerr-Blanchard M."/>
            <person name="Klein C."/>
            <person name="Kobayashi Y."/>
            <person name="Koetter P."/>
            <person name="Koningstein G."/>
            <person name="Krogh S."/>
            <person name="Kumano M."/>
            <person name="Kurita K."/>
            <person name="Lapidus A."/>
            <person name="Lardinois S."/>
            <person name="Lauber J."/>
            <person name="Lazarevic V."/>
            <person name="Lee S.-M."/>
            <person name="Levine A."/>
            <person name="Liu H."/>
            <person name="Masuda S."/>
            <person name="Mauel C."/>
            <person name="Medigue C."/>
            <person name="Medina N."/>
            <person name="Mellado R.P."/>
            <person name="Mizuno M."/>
            <person name="Moestl D."/>
            <person name="Nakai S."/>
            <person name="Noback M."/>
            <person name="Noone D."/>
            <person name="O'Reilly M."/>
            <person name="Ogawa K."/>
            <person name="Ogiwara A."/>
            <person name="Oudega B."/>
            <person name="Park S.-H."/>
            <person name="Parro V."/>
            <person name="Pohl T.M."/>
            <person name="Portetelle D."/>
            <person name="Porwollik S."/>
            <person name="Prescott A.M."/>
            <person name="Presecan E."/>
            <person name="Pujic P."/>
            <person name="Purnelle B."/>
            <person name="Rapoport G."/>
            <person name="Rey M."/>
            <person name="Reynolds S."/>
            <person name="Rieger M."/>
            <person name="Rivolta C."/>
            <person name="Rocha E."/>
            <person name="Roche B."/>
            <person name="Rose M."/>
            <person name="Sadaie Y."/>
            <person name="Sato T."/>
            <person name="Scanlan E."/>
            <person name="Schleich S."/>
            <person name="Schroeter R."/>
            <person name="Scoffone F."/>
            <person name="Sekiguchi J."/>
            <person name="Sekowska A."/>
            <person name="Seror S.J."/>
            <person name="Serror P."/>
            <person name="Shin B.-S."/>
            <person name="Soldo B."/>
            <person name="Sorokin A."/>
            <person name="Tacconi E."/>
            <person name="Takagi T."/>
            <person name="Takahashi H."/>
            <person name="Takemaru K."/>
            <person name="Takeuchi M."/>
            <person name="Tamakoshi A."/>
            <person name="Tanaka T."/>
            <person name="Terpstra P."/>
            <person name="Tognoni A."/>
            <person name="Tosato V."/>
            <person name="Uchiyama S."/>
            <person name="Vandenbol M."/>
            <person name="Vannier F."/>
            <person name="Vassarotti A."/>
            <person name="Viari A."/>
            <person name="Wambutt R."/>
            <person name="Wedler E."/>
            <person name="Wedler H."/>
            <person name="Weitzenegger T."/>
            <person name="Winters P."/>
            <person name="Wipat A."/>
            <person name="Yamamoto H."/>
            <person name="Yamane K."/>
            <person name="Yasumoto K."/>
            <person name="Yata K."/>
            <person name="Yoshida K."/>
            <person name="Yoshikawa H.-F."/>
            <person name="Zumstein E."/>
            <person name="Yoshikawa H."/>
            <person name="Danchin A."/>
        </authorList>
    </citation>
    <scope>NUCLEOTIDE SEQUENCE [LARGE SCALE GENOMIC DNA]</scope>
    <source>
        <strain>168</strain>
    </source>
</reference>
<reference key="4">
    <citation type="journal article" date="2007" name="Mol. Cell. Proteomics">
        <title>The serine/threonine/tyrosine phosphoproteome of the model bacterium Bacillus subtilis.</title>
        <authorList>
            <person name="Macek B."/>
            <person name="Mijakovic I."/>
            <person name="Olsen J.V."/>
            <person name="Gnad F."/>
            <person name="Kumar C."/>
            <person name="Jensen P.R."/>
            <person name="Mann M."/>
        </authorList>
    </citation>
    <scope>PHOSPHORYLATION [LARGE SCALE ANALYSIS] AT SER-117</scope>
    <scope>IDENTIFICATION BY MASS SPECTROMETRY</scope>
    <source>
        <strain>168</strain>
    </source>
</reference>
<evidence type="ECO:0000269" key="1">
    <source>
    </source>
</evidence>
<feature type="chain" id="PRO_0000049716" description="Uncharacterized protein YpoC">
    <location>
        <begin position="1"/>
        <end position="164"/>
    </location>
</feature>
<feature type="modified residue" description="Phosphoserine" evidence="1">
    <location>
        <position position="117"/>
    </location>
</feature>